<evidence type="ECO:0000250" key="1"/>
<evidence type="ECO:0000269" key="2">
    <source>
    </source>
</evidence>
<evidence type="ECO:0000269" key="3">
    <source>
    </source>
</evidence>
<evidence type="ECO:0000305" key="4"/>
<proteinExistence type="evidence at protein level"/>
<protein>
    <recommendedName>
        <fullName>Probable di- and tripeptidase DUG2</fullName>
        <ecNumber>3.4.-.-</ecNumber>
    </recommendedName>
    <alternativeName>
        <fullName>Deficient in utilization of glutathione protein 2</fullName>
    </alternativeName>
    <alternativeName>
        <fullName>GSH degradosomal complex subunit DUG2</fullName>
    </alternativeName>
</protein>
<gene>
    <name type="primary">DUG2</name>
    <name type="ordered locus">YBR281C</name>
    <name type="ORF">YBR2018</name>
</gene>
<dbReference type="EC" id="3.4.-.-"/>
<dbReference type="EMBL" id="X76053">
    <property type="protein sequence ID" value="CAA53644.1"/>
    <property type="molecule type" value="Genomic_DNA"/>
</dbReference>
<dbReference type="EMBL" id="Z36150">
    <property type="protein sequence ID" value="CAA85245.1"/>
    <property type="molecule type" value="Genomic_DNA"/>
</dbReference>
<dbReference type="EMBL" id="BK006936">
    <property type="protein sequence ID" value="DAA07396.1"/>
    <property type="molecule type" value="Genomic_DNA"/>
</dbReference>
<dbReference type="PIR" id="S44543">
    <property type="entry name" value="S44543"/>
</dbReference>
<dbReference type="RefSeq" id="NP_009840.3">
    <property type="nucleotide sequence ID" value="NM_001178629.3"/>
</dbReference>
<dbReference type="SMR" id="P38149"/>
<dbReference type="BioGRID" id="32975">
    <property type="interactions" value="62"/>
</dbReference>
<dbReference type="ComplexPortal" id="CPX-325">
    <property type="entry name" value="Glutathione hydrolase complex"/>
</dbReference>
<dbReference type="DIP" id="DIP-1612N"/>
<dbReference type="FunCoup" id="P38149">
    <property type="interactions" value="114"/>
</dbReference>
<dbReference type="IntAct" id="P38149">
    <property type="interactions" value="8"/>
</dbReference>
<dbReference type="MINT" id="P38149"/>
<dbReference type="STRING" id="4932.YBR281C"/>
<dbReference type="iPTMnet" id="P38149"/>
<dbReference type="PaxDb" id="4932-YBR281C"/>
<dbReference type="PeptideAtlas" id="P38149"/>
<dbReference type="EnsemblFungi" id="YBR281C_mRNA">
    <property type="protein sequence ID" value="YBR281C"/>
    <property type="gene ID" value="YBR281C"/>
</dbReference>
<dbReference type="GeneID" id="852584"/>
<dbReference type="KEGG" id="sce:YBR281C"/>
<dbReference type="AGR" id="SGD:S000000485"/>
<dbReference type="SGD" id="S000000485">
    <property type="gene designation" value="DUG2"/>
</dbReference>
<dbReference type="VEuPathDB" id="FungiDB:YBR281C"/>
<dbReference type="eggNOG" id="KOG2276">
    <property type="taxonomic scope" value="Eukaryota"/>
</dbReference>
<dbReference type="HOGENOM" id="CLU_008535_0_0_1"/>
<dbReference type="InParanoid" id="P38149"/>
<dbReference type="OMA" id="HATVCVD"/>
<dbReference type="OrthoDB" id="7832001at2759"/>
<dbReference type="BioCyc" id="MetaCyc:G3O-29201-MONOMER"/>
<dbReference type="BioCyc" id="YEAST:G3O-29201-MONOMER"/>
<dbReference type="BioGRID-ORCS" id="852584">
    <property type="hits" value="0 hits in 10 CRISPR screens"/>
</dbReference>
<dbReference type="PRO" id="PR:P38149"/>
<dbReference type="Proteomes" id="UP000002311">
    <property type="component" value="Chromosome II"/>
</dbReference>
<dbReference type="RNAct" id="P38149">
    <property type="molecule type" value="protein"/>
</dbReference>
<dbReference type="GO" id="GO:0005737">
    <property type="term" value="C:cytoplasm"/>
    <property type="evidence" value="ECO:0000314"/>
    <property type="project" value="SGD"/>
</dbReference>
<dbReference type="GO" id="GO:0061672">
    <property type="term" value="C:glutathione hydrolase complex"/>
    <property type="evidence" value="ECO:0000314"/>
    <property type="project" value="ComplexPortal"/>
</dbReference>
<dbReference type="GO" id="GO:0034399">
    <property type="term" value="C:nuclear periphery"/>
    <property type="evidence" value="ECO:0000314"/>
    <property type="project" value="SGD"/>
</dbReference>
<dbReference type="GO" id="GO:0005634">
    <property type="term" value="C:nucleus"/>
    <property type="evidence" value="ECO:0007005"/>
    <property type="project" value="SGD"/>
</dbReference>
<dbReference type="GO" id="GO:0016805">
    <property type="term" value="F:dipeptidase activity"/>
    <property type="evidence" value="ECO:0007669"/>
    <property type="project" value="UniProtKB-KW"/>
</dbReference>
<dbReference type="GO" id="GO:0042802">
    <property type="term" value="F:identical protein binding"/>
    <property type="evidence" value="ECO:0000353"/>
    <property type="project" value="IntAct"/>
</dbReference>
<dbReference type="GO" id="GO:0046872">
    <property type="term" value="F:metal ion binding"/>
    <property type="evidence" value="ECO:0007669"/>
    <property type="project" value="UniProtKB-KW"/>
</dbReference>
<dbReference type="GO" id="GO:0008237">
    <property type="term" value="F:metallopeptidase activity"/>
    <property type="evidence" value="ECO:0007669"/>
    <property type="project" value="UniProtKB-KW"/>
</dbReference>
<dbReference type="GO" id="GO:0008242">
    <property type="term" value="F:omega peptidase activity"/>
    <property type="evidence" value="ECO:0000316"/>
    <property type="project" value="SGD"/>
</dbReference>
<dbReference type="GO" id="GO:0008233">
    <property type="term" value="F:peptidase activity"/>
    <property type="evidence" value="ECO:0000316"/>
    <property type="project" value="SGD"/>
</dbReference>
<dbReference type="GO" id="GO:0006751">
    <property type="term" value="P:glutathione catabolic process"/>
    <property type="evidence" value="ECO:0000314"/>
    <property type="project" value="ComplexPortal"/>
</dbReference>
<dbReference type="GO" id="GO:0006508">
    <property type="term" value="P:proteolysis"/>
    <property type="evidence" value="ECO:0000318"/>
    <property type="project" value="GO_Central"/>
</dbReference>
<dbReference type="CDD" id="cd05677">
    <property type="entry name" value="M20_dipept_like_DUG2_type"/>
    <property type="match status" value="1"/>
</dbReference>
<dbReference type="FunFam" id="2.130.10.10:FF:001401">
    <property type="entry name" value="Dug2p"/>
    <property type="match status" value="1"/>
</dbReference>
<dbReference type="FunFam" id="2.130.10.10:FF:001543">
    <property type="entry name" value="Dug2p"/>
    <property type="match status" value="1"/>
</dbReference>
<dbReference type="FunFam" id="3.30.70.360:FF:000029">
    <property type="entry name" value="Dug2p"/>
    <property type="match status" value="1"/>
</dbReference>
<dbReference type="Gene3D" id="3.30.70.360">
    <property type="match status" value="1"/>
</dbReference>
<dbReference type="Gene3D" id="2.130.10.10">
    <property type="entry name" value="YVTN repeat-like/Quinoprotein amine dehydrogenase"/>
    <property type="match status" value="2"/>
</dbReference>
<dbReference type="Gene3D" id="3.40.630.10">
    <property type="entry name" value="Zn peptidases"/>
    <property type="match status" value="1"/>
</dbReference>
<dbReference type="InterPro" id="IPR036264">
    <property type="entry name" value="Bact_exopeptidase_dim_dom"/>
</dbReference>
<dbReference type="InterPro" id="IPR051458">
    <property type="entry name" value="Cyt/Met_Dipeptidase"/>
</dbReference>
<dbReference type="InterPro" id="IPR020472">
    <property type="entry name" value="G-protein_beta_WD-40_rep"/>
</dbReference>
<dbReference type="InterPro" id="IPR017149">
    <property type="entry name" value="GSH_degradosome_Dug2"/>
</dbReference>
<dbReference type="InterPro" id="IPR002933">
    <property type="entry name" value="Peptidase_M20"/>
</dbReference>
<dbReference type="InterPro" id="IPR011650">
    <property type="entry name" value="Peptidase_M20_dimer"/>
</dbReference>
<dbReference type="InterPro" id="IPR015943">
    <property type="entry name" value="WD40/YVTN_repeat-like_dom_sf"/>
</dbReference>
<dbReference type="InterPro" id="IPR036322">
    <property type="entry name" value="WD40_repeat_dom_sf"/>
</dbReference>
<dbReference type="InterPro" id="IPR001680">
    <property type="entry name" value="WD40_rpt"/>
</dbReference>
<dbReference type="PANTHER" id="PTHR43270">
    <property type="entry name" value="BETA-ALA-HIS DIPEPTIDASE"/>
    <property type="match status" value="1"/>
</dbReference>
<dbReference type="PANTHER" id="PTHR43270:SF8">
    <property type="entry name" value="DI- AND TRIPEPTIDASE DUG2-RELATED"/>
    <property type="match status" value="1"/>
</dbReference>
<dbReference type="Pfam" id="PF07687">
    <property type="entry name" value="M20_dimer"/>
    <property type="match status" value="1"/>
</dbReference>
<dbReference type="Pfam" id="PF01546">
    <property type="entry name" value="Peptidase_M20"/>
    <property type="match status" value="1"/>
</dbReference>
<dbReference type="Pfam" id="PF00400">
    <property type="entry name" value="WD40"/>
    <property type="match status" value="1"/>
</dbReference>
<dbReference type="PIRSF" id="PIRSF037237">
    <property type="entry name" value="Peptidase_WD_repeats_DUG2"/>
    <property type="match status" value="1"/>
</dbReference>
<dbReference type="PRINTS" id="PR00320">
    <property type="entry name" value="GPROTEINBRPT"/>
</dbReference>
<dbReference type="SMART" id="SM00320">
    <property type="entry name" value="WD40"/>
    <property type="match status" value="4"/>
</dbReference>
<dbReference type="SUPFAM" id="SSF55031">
    <property type="entry name" value="Bacterial exopeptidase dimerisation domain"/>
    <property type="match status" value="1"/>
</dbReference>
<dbReference type="SUPFAM" id="SSF50978">
    <property type="entry name" value="WD40 repeat-like"/>
    <property type="match status" value="1"/>
</dbReference>
<dbReference type="SUPFAM" id="SSF53187">
    <property type="entry name" value="Zn-dependent exopeptidases"/>
    <property type="match status" value="1"/>
</dbReference>
<dbReference type="PROSITE" id="PS00678">
    <property type="entry name" value="WD_REPEATS_1"/>
    <property type="match status" value="2"/>
</dbReference>
<dbReference type="PROSITE" id="PS50082">
    <property type="entry name" value="WD_REPEATS_2"/>
    <property type="match status" value="2"/>
</dbReference>
<dbReference type="PROSITE" id="PS50294">
    <property type="entry name" value="WD_REPEATS_REGION"/>
    <property type="match status" value="1"/>
</dbReference>
<sequence>MYDSRGVALHSELIHRWNHAFSILSIVAFPKKRLLFAGSQDSKILVFDLPTYNLIHTIRLGESQEETHTRSSVLCLTGSEDENFLFSGGADSLVRIWSIGEKTIRDDFLPVTEIATVYSVTDIGDIFSLAYLDSLETIVFGCQNASLLYVENLIQKIEKKSSDGVENINKLPHRRYDKFFDSLGPTGYSSNSLSQTSLTSLQENCGAAIIEVPSENIIKYAHYGFIYSINKLCPRFNQLLEKSSRTSGAEHIISSAGDGISKLWEFSKDKGQNTVKISLINDKIDNEDSVISQTIEFPFLYCGLTDGIIKIWDLNTQQIISTLKTKHESDVISISVYMDHVFAIDESGITHFYQNQVNHWNPQQGKILSSEIFSKSNAGSVSLLTGGSDGSLTLWDITSLLSAVPLSSNSPINASSTLQTTNLWAAYQSASLNNEEMLNTLRELISFQTVSQSKDTTNTLSLRRCAIYLQQLFLKFGATNSQLFPLPDGGNPVVFAYFQGNGKVSQVKGAKKKRILWYGHYDVISSGNTFNWNTDPFTLTCENGYLKGRGVSDNKGPLVSAIHSVAYLFQQGELVNDVVFLVEGSEEIGSASLKQVCEKYHDIIGKDIDWILLSNSTWVDQEHPCLNYGLRGVINAQIKVWSDKPDGHSGLNGGVYDEPMVNLVKIVSKLQNEQNEIMIPNFYSPLKDLTEEEYQRFQKITELANIDENTTVQDLITNWTKPSLSMTTVKFSGPGNITVIPKSVTMGISIRLVPEQSVEQVKRDLKAYLEESFKQLKSQNHLEIKVLNEAEGWLGDPTNHAYQILKDEITTAWDVEPLLVREGGSISCLRMLERIFDAPAVQIPCGQSTDNGHLANENLRIKNWSNLTEILSKVFNRL</sequence>
<reference key="1">
    <citation type="journal article" date="1994" name="Yeast">
        <title>The sequence of a 32,420 bp segment located on the right arm of chromosome II from Saccharomyces cerevisiae.</title>
        <authorList>
            <person name="Holmstroem K."/>
            <person name="Brandt T."/>
            <person name="Kallesoe T."/>
        </authorList>
    </citation>
    <scope>NUCLEOTIDE SEQUENCE [GENOMIC DNA]</scope>
    <source>
        <strain>ATCC 204508 / S288c</strain>
    </source>
</reference>
<reference key="2">
    <citation type="journal article" date="1994" name="EMBO J.">
        <title>Complete DNA sequence of yeast chromosome II.</title>
        <authorList>
            <person name="Feldmann H."/>
            <person name="Aigle M."/>
            <person name="Aljinovic G."/>
            <person name="Andre B."/>
            <person name="Baclet M.C."/>
            <person name="Barthe C."/>
            <person name="Baur A."/>
            <person name="Becam A.-M."/>
            <person name="Biteau N."/>
            <person name="Boles E."/>
            <person name="Brandt T."/>
            <person name="Brendel M."/>
            <person name="Brueckner M."/>
            <person name="Bussereau F."/>
            <person name="Christiansen C."/>
            <person name="Contreras R."/>
            <person name="Crouzet M."/>
            <person name="Cziepluch C."/>
            <person name="Demolis N."/>
            <person name="Delaveau T."/>
            <person name="Doignon F."/>
            <person name="Domdey H."/>
            <person name="Duesterhus S."/>
            <person name="Dubois E."/>
            <person name="Dujon B."/>
            <person name="El Bakkoury M."/>
            <person name="Entian K.-D."/>
            <person name="Feuermann M."/>
            <person name="Fiers W."/>
            <person name="Fobo G.M."/>
            <person name="Fritz C."/>
            <person name="Gassenhuber J."/>
            <person name="Glansdorff N."/>
            <person name="Goffeau A."/>
            <person name="Grivell L.A."/>
            <person name="de Haan M."/>
            <person name="Hein C."/>
            <person name="Herbert C.J."/>
            <person name="Hollenberg C.P."/>
            <person name="Holmstroem K."/>
            <person name="Jacq C."/>
            <person name="Jacquet M."/>
            <person name="Jauniaux J.-C."/>
            <person name="Jonniaux J.-L."/>
            <person name="Kallesoee T."/>
            <person name="Kiesau P."/>
            <person name="Kirchrath L."/>
            <person name="Koetter P."/>
            <person name="Korol S."/>
            <person name="Liebl S."/>
            <person name="Logghe M."/>
            <person name="Lohan A.J.E."/>
            <person name="Louis E.J."/>
            <person name="Li Z.Y."/>
            <person name="Maat M.J."/>
            <person name="Mallet L."/>
            <person name="Mannhaupt G."/>
            <person name="Messenguy F."/>
            <person name="Miosga T."/>
            <person name="Molemans F."/>
            <person name="Mueller S."/>
            <person name="Nasr F."/>
            <person name="Obermaier B."/>
            <person name="Perea J."/>
            <person name="Pierard A."/>
            <person name="Piravandi E."/>
            <person name="Pohl F.M."/>
            <person name="Pohl T.M."/>
            <person name="Potier S."/>
            <person name="Proft M."/>
            <person name="Purnelle B."/>
            <person name="Ramezani Rad M."/>
            <person name="Rieger M."/>
            <person name="Rose M."/>
            <person name="Schaaff-Gerstenschlaeger I."/>
            <person name="Scherens B."/>
            <person name="Schwarzlose C."/>
            <person name="Skala J."/>
            <person name="Slonimski P.P."/>
            <person name="Smits P.H.M."/>
            <person name="Souciet J.-L."/>
            <person name="Steensma H.Y."/>
            <person name="Stucka R."/>
            <person name="Urrestarazu L.A."/>
            <person name="van der Aart Q.J.M."/>
            <person name="Van Dyck L."/>
            <person name="Vassarotti A."/>
            <person name="Vetter I."/>
            <person name="Vierendeels F."/>
            <person name="Vissers S."/>
            <person name="Wagner G."/>
            <person name="de Wergifosse P."/>
            <person name="Wolfe K.H."/>
            <person name="Zagulski M."/>
            <person name="Zimmermann F.K."/>
            <person name="Mewes H.-W."/>
            <person name="Kleine K."/>
        </authorList>
    </citation>
    <scope>NUCLEOTIDE SEQUENCE [LARGE SCALE GENOMIC DNA]</scope>
    <source>
        <strain>ATCC 204508 / S288c</strain>
    </source>
</reference>
<reference key="3">
    <citation type="journal article" date="2014" name="G3 (Bethesda)">
        <title>The reference genome sequence of Saccharomyces cerevisiae: Then and now.</title>
        <authorList>
            <person name="Engel S.R."/>
            <person name="Dietrich F.S."/>
            <person name="Fisk D.G."/>
            <person name="Binkley G."/>
            <person name="Balakrishnan R."/>
            <person name="Costanzo M.C."/>
            <person name="Dwight S.S."/>
            <person name="Hitz B.C."/>
            <person name="Karra K."/>
            <person name="Nash R.S."/>
            <person name="Weng S."/>
            <person name="Wong E.D."/>
            <person name="Lloyd P."/>
            <person name="Skrzypek M.S."/>
            <person name="Miyasato S.R."/>
            <person name="Simison M."/>
            <person name="Cherry J.M."/>
        </authorList>
    </citation>
    <scope>GENOME REANNOTATION</scope>
    <source>
        <strain>ATCC 204508 / S288c</strain>
    </source>
</reference>
<reference key="4">
    <citation type="journal article" date="2003" name="Nature">
        <title>Global analysis of protein localization in budding yeast.</title>
        <authorList>
            <person name="Huh W.-K."/>
            <person name="Falvo J.V."/>
            <person name="Gerke L.C."/>
            <person name="Carroll A.S."/>
            <person name="Howson R.W."/>
            <person name="Weissman J.S."/>
            <person name="O'Shea E.K."/>
        </authorList>
    </citation>
    <scope>SUBCELLULAR LOCATION [LARGE SCALE ANALYSIS]</scope>
</reference>
<reference key="5">
    <citation type="journal article" date="2003" name="Nature">
        <title>Global analysis of protein expression in yeast.</title>
        <authorList>
            <person name="Ghaemmaghami S."/>
            <person name="Huh W.-K."/>
            <person name="Bower K."/>
            <person name="Howson R.W."/>
            <person name="Belle A."/>
            <person name="Dephoure N."/>
            <person name="O'Shea E.K."/>
            <person name="Weissman J.S."/>
        </authorList>
    </citation>
    <scope>LEVEL OF PROTEIN EXPRESSION [LARGE SCALE ANALYSIS]</scope>
</reference>
<reference key="6">
    <citation type="journal article" date="2007" name="Genetics">
        <title>The alternative pathway of glutathione degradation is mediated by a novel protein complex involving three new genes in Saccharomyces cerevisiae.</title>
        <authorList>
            <person name="Ganguli D."/>
            <person name="Kumar C."/>
            <person name="Bachhawat A.K."/>
        </authorList>
    </citation>
    <scope>FUNCTION</scope>
    <scope>IDENTIFICATION IN THE GSH DEGRADOSOMAL COMPLEX</scope>
    <scope>SUBCELLULAR LOCATION</scope>
</reference>
<reference key="7">
    <citation type="journal article" date="2008" name="Mol. Cell. Proteomics">
        <title>A multidimensional chromatography technology for in-depth phosphoproteome analysis.</title>
        <authorList>
            <person name="Albuquerque C.P."/>
            <person name="Smolka M.B."/>
            <person name="Payne S.H."/>
            <person name="Bafna V."/>
            <person name="Eng J."/>
            <person name="Zhou H."/>
        </authorList>
    </citation>
    <scope>IDENTIFICATION BY MASS SPECTROMETRY [LARGE SCALE ANALYSIS]</scope>
</reference>
<name>DUG2_YEAST</name>
<accession>P38149</accession>
<accession>D6VQS6</accession>
<organism>
    <name type="scientific">Saccharomyces cerevisiae (strain ATCC 204508 / S288c)</name>
    <name type="common">Baker's yeast</name>
    <dbReference type="NCBI Taxonomy" id="559292"/>
    <lineage>
        <taxon>Eukaryota</taxon>
        <taxon>Fungi</taxon>
        <taxon>Dikarya</taxon>
        <taxon>Ascomycota</taxon>
        <taxon>Saccharomycotina</taxon>
        <taxon>Saccharomycetes</taxon>
        <taxon>Saccharomycetales</taxon>
        <taxon>Saccharomycetaceae</taxon>
        <taxon>Saccharomyces</taxon>
    </lineage>
</organism>
<keyword id="KW-0963">Cytoplasm</keyword>
<keyword id="KW-0224">Dipeptidase</keyword>
<keyword id="KW-0378">Hydrolase</keyword>
<keyword id="KW-0479">Metal-binding</keyword>
<keyword id="KW-0482">Metalloprotease</keyword>
<keyword id="KW-0539">Nucleus</keyword>
<keyword id="KW-0645">Protease</keyword>
<keyword id="KW-1185">Reference proteome</keyword>
<keyword id="KW-0677">Repeat</keyword>
<keyword id="KW-0853">WD repeat</keyword>
<keyword id="KW-0862">Zinc</keyword>
<comment type="function">
    <text evidence="3">Component of the GSH degradosomal complex involved in the degradation of glutathione (GSH) and other peptides containing a gamma-glu-X bond.</text>
</comment>
<comment type="cofactor">
    <cofactor evidence="1">
        <name>Zn(2+)</name>
        <dbReference type="ChEBI" id="CHEBI:29105"/>
    </cofactor>
    <text evidence="1">Binds 2 Zn(2+) ions per subunit.</text>
</comment>
<comment type="subunit">
    <text evidence="3">Component of the GSH degradosomal complex composed of at least DUG1, DUG2 and DUG3.</text>
</comment>
<comment type="interaction">
    <interactant intactId="EBI-21176">
        <id>P38149</id>
    </interactant>
    <interactant intactId="EBI-21176">
        <id>P38149</id>
        <label>DUG2</label>
    </interactant>
    <organismsDiffer>false</organismsDiffer>
    <experiments>2</experiments>
</comment>
<comment type="interaction">
    <interactant intactId="EBI-21176">
        <id>P38149</id>
    </interactant>
    <interactant intactId="EBI-29079">
        <id>P53871</id>
        <label>DUG3</label>
    </interactant>
    <organismsDiffer>false</organismsDiffer>
    <experiments>5</experiments>
</comment>
<comment type="subcellular location">
    <subcellularLocation>
        <location>Cytoplasm</location>
    </subcellularLocation>
    <subcellularLocation>
        <location>Nucleus</location>
    </subcellularLocation>
</comment>
<comment type="miscellaneous">
    <text evidence="2">Present with 1940 molecules/cell in log phase SD medium.</text>
</comment>
<comment type="similarity">
    <text evidence="4">Belongs to the peptidase M20A family.</text>
</comment>
<feature type="chain" id="PRO_0000051469" description="Probable di- and tripeptidase DUG2">
    <location>
        <begin position="1"/>
        <end position="878"/>
    </location>
</feature>
<feature type="repeat" description="WD 1">
    <location>
        <begin position="18"/>
        <end position="57"/>
    </location>
</feature>
<feature type="repeat" description="WD 2">
    <location>
        <begin position="68"/>
        <end position="107"/>
    </location>
</feature>
<feature type="repeat" description="WD 3">
    <location>
        <begin position="235"/>
        <end position="274"/>
    </location>
</feature>
<feature type="repeat" description="WD 4">
    <location>
        <begin position="282"/>
        <end position="322"/>
    </location>
</feature>
<feature type="repeat" description="WD 5">
    <location>
        <begin position="362"/>
        <end position="405"/>
    </location>
</feature>
<feature type="repeat" description="WD 6">
    <location>
        <begin position="608"/>
        <end position="651"/>
    </location>
</feature>
<feature type="active site" evidence="1">
    <location>
        <position position="522"/>
    </location>
</feature>
<feature type="active site" description="Proton acceptor" evidence="1">
    <location>
        <position position="586"/>
    </location>
</feature>
<feature type="binding site" evidence="1">
    <location>
        <position position="520"/>
    </location>
    <ligand>
        <name>Zn(2+)</name>
        <dbReference type="ChEBI" id="CHEBI:29105"/>
        <label>2</label>
    </ligand>
</feature>
<feature type="binding site" evidence="1">
    <location>
        <position position="553"/>
    </location>
    <ligand>
        <name>Zn(2+)</name>
        <dbReference type="ChEBI" id="CHEBI:29105"/>
        <label>1</label>
    </ligand>
</feature>
<feature type="binding site" evidence="1">
    <location>
        <position position="553"/>
    </location>
    <ligand>
        <name>Zn(2+)</name>
        <dbReference type="ChEBI" id="CHEBI:29105"/>
        <label>2</label>
    </ligand>
</feature>
<feature type="binding site" evidence="1">
    <location>
        <position position="587"/>
    </location>
    <ligand>
        <name>Zn(2+)</name>
        <dbReference type="ChEBI" id="CHEBI:29105"/>
        <label>1</label>
    </ligand>
</feature>
<feature type="binding site" evidence="1">
    <location>
        <position position="853"/>
    </location>
    <ligand>
        <name>Zn(2+)</name>
        <dbReference type="ChEBI" id="CHEBI:29105"/>
        <label>1</label>
    </ligand>
</feature>